<sequence>MSVSRRVIHHGLYFAVLGPLIGVLFLVLYIFFAKEPLVLWVIIHPIFLLLSITTGAIPALLTGVMVACLPEKIGSQKRYRCLAGGIGGVVITEIYCAVIVHIKGMASSELFENILSGDSLVVRIIPALLAGVVMSRIITRLPGLDISCPETDSLS</sequence>
<comment type="subcellular location">
    <subcellularLocation>
        <location>Cell inner membrane</location>
        <topology>Multi-pass membrane protein</topology>
    </subcellularLocation>
</comment>
<comment type="induction">
    <text evidence="2">Induced by the two-component regulatory system CreC/CreB.</text>
</comment>
<comment type="miscellaneous">
    <text>Disruption of this gene leads to hypersensibility to nitrofurazone.</text>
</comment>
<comment type="similarity">
    <text evidence="3">Belongs to the CbrB family.</text>
</comment>
<protein>
    <recommendedName>
        <fullName>Inner membrane protein CbrB</fullName>
    </recommendedName>
    <alternativeName>
        <fullName>CreB-regulated gene B protein</fullName>
    </alternativeName>
</protein>
<accession>P31468</accession>
<accession>Q2M834</accession>
<keyword id="KW-0997">Cell inner membrane</keyword>
<keyword id="KW-1003">Cell membrane</keyword>
<keyword id="KW-0472">Membrane</keyword>
<keyword id="KW-1185">Reference proteome</keyword>
<keyword id="KW-0812">Transmembrane</keyword>
<keyword id="KW-1133">Transmembrane helix</keyword>
<evidence type="ECO:0000255" key="1"/>
<evidence type="ECO:0000269" key="2">
    <source>
    </source>
</evidence>
<evidence type="ECO:0000305" key="3"/>
<feature type="chain" id="PRO_0000169639" description="Inner membrane protein CbrB">
    <location>
        <begin position="1"/>
        <end position="155"/>
    </location>
</feature>
<feature type="topological domain" description="Cytoplasmic" evidence="1">
    <location>
        <begin position="1"/>
        <end position="11"/>
    </location>
</feature>
<feature type="transmembrane region" description="Helical" evidence="1">
    <location>
        <begin position="12"/>
        <end position="32"/>
    </location>
</feature>
<feature type="topological domain" description="Periplasmic" evidence="1">
    <location>
        <begin position="33"/>
        <end position="36"/>
    </location>
</feature>
<feature type="transmembrane region" description="Helical" evidence="1">
    <location>
        <begin position="37"/>
        <end position="57"/>
    </location>
</feature>
<feature type="topological domain" description="Cytoplasmic" evidence="1">
    <location>
        <begin position="58"/>
        <end position="81"/>
    </location>
</feature>
<feature type="transmembrane region" description="Helical" evidence="1">
    <location>
        <begin position="82"/>
        <end position="102"/>
    </location>
</feature>
<feature type="topological domain" description="Periplasmic" evidence="1">
    <location>
        <begin position="103"/>
        <end position="113"/>
    </location>
</feature>
<feature type="transmembrane region" description="Helical" evidence="1">
    <location>
        <begin position="114"/>
        <end position="134"/>
    </location>
</feature>
<feature type="topological domain" description="Cytoplasmic" evidence="1">
    <location>
        <begin position="135"/>
        <end position="155"/>
    </location>
</feature>
<proteinExistence type="evidence at protein level"/>
<gene>
    <name type="primary">cbrB</name>
    <name type="synonym">yieI</name>
    <name type="ordered locus">b3716</name>
    <name type="ordered locus">JW3694</name>
</gene>
<dbReference type="EMBL" id="L10328">
    <property type="protein sequence ID" value="AAA62067.1"/>
    <property type="molecule type" value="Genomic_DNA"/>
</dbReference>
<dbReference type="EMBL" id="U00096">
    <property type="protein sequence ID" value="AAC76739.1"/>
    <property type="molecule type" value="Genomic_DNA"/>
</dbReference>
<dbReference type="EMBL" id="AP009048">
    <property type="protein sequence ID" value="BAE77572.1"/>
    <property type="molecule type" value="Genomic_DNA"/>
</dbReference>
<dbReference type="PIR" id="E65174">
    <property type="entry name" value="E65174"/>
</dbReference>
<dbReference type="RefSeq" id="NP_418172.1">
    <property type="nucleotide sequence ID" value="NC_000913.3"/>
</dbReference>
<dbReference type="RefSeq" id="WP_000116777.1">
    <property type="nucleotide sequence ID" value="NZ_SSZK01000035.1"/>
</dbReference>
<dbReference type="BioGRID" id="4263199">
    <property type="interactions" value="6"/>
</dbReference>
<dbReference type="FunCoup" id="P31468">
    <property type="interactions" value="100"/>
</dbReference>
<dbReference type="STRING" id="511145.b3716"/>
<dbReference type="PaxDb" id="511145-b3716"/>
<dbReference type="EnsemblBacteria" id="AAC76739">
    <property type="protein sequence ID" value="AAC76739"/>
    <property type="gene ID" value="b3716"/>
</dbReference>
<dbReference type="GeneID" id="948231"/>
<dbReference type="KEGG" id="ecj:JW3694"/>
<dbReference type="KEGG" id="eco:b3716"/>
<dbReference type="KEGG" id="ecoc:C3026_20145"/>
<dbReference type="PATRIC" id="fig|1411691.4.peg.2985"/>
<dbReference type="EchoBASE" id="EB1677"/>
<dbReference type="HOGENOM" id="CLU_139024_0_0_6"/>
<dbReference type="InParanoid" id="P31468"/>
<dbReference type="OMA" id="CAVIIHI"/>
<dbReference type="OrthoDB" id="6581675at2"/>
<dbReference type="BioCyc" id="EcoCyc:EG11726-MONOMER"/>
<dbReference type="PRO" id="PR:P31468"/>
<dbReference type="Proteomes" id="UP000000625">
    <property type="component" value="Chromosome"/>
</dbReference>
<dbReference type="GO" id="GO:0005886">
    <property type="term" value="C:plasma membrane"/>
    <property type="evidence" value="ECO:0000314"/>
    <property type="project" value="EcoCyc"/>
</dbReference>
<dbReference type="NCBIfam" id="NF007334">
    <property type="entry name" value="PRK09823.1"/>
    <property type="match status" value="1"/>
</dbReference>
<organism>
    <name type="scientific">Escherichia coli (strain K12)</name>
    <dbReference type="NCBI Taxonomy" id="83333"/>
    <lineage>
        <taxon>Bacteria</taxon>
        <taxon>Pseudomonadati</taxon>
        <taxon>Pseudomonadota</taxon>
        <taxon>Gammaproteobacteria</taxon>
        <taxon>Enterobacterales</taxon>
        <taxon>Enterobacteriaceae</taxon>
        <taxon>Escherichia</taxon>
    </lineage>
</organism>
<reference key="1">
    <citation type="journal article" date="1993" name="Genomics">
        <title>DNA sequence and analysis of 136 kilobases of the Escherichia coli genome: organizational symmetry around the origin of replication.</title>
        <authorList>
            <person name="Burland V.D."/>
            <person name="Plunkett G. III"/>
            <person name="Daniels D.L."/>
            <person name="Blattner F.R."/>
        </authorList>
    </citation>
    <scope>NUCLEOTIDE SEQUENCE [LARGE SCALE GENOMIC DNA]</scope>
    <source>
        <strain>K12 / MG1655 / ATCC 47076</strain>
    </source>
</reference>
<reference key="2">
    <citation type="journal article" date="1997" name="Science">
        <title>The complete genome sequence of Escherichia coli K-12.</title>
        <authorList>
            <person name="Blattner F.R."/>
            <person name="Plunkett G. III"/>
            <person name="Bloch C.A."/>
            <person name="Perna N.T."/>
            <person name="Burland V."/>
            <person name="Riley M."/>
            <person name="Collado-Vides J."/>
            <person name="Glasner J.D."/>
            <person name="Rode C.K."/>
            <person name="Mayhew G.F."/>
            <person name="Gregor J."/>
            <person name="Davis N.W."/>
            <person name="Kirkpatrick H.A."/>
            <person name="Goeden M.A."/>
            <person name="Rose D.J."/>
            <person name="Mau B."/>
            <person name="Shao Y."/>
        </authorList>
    </citation>
    <scope>NUCLEOTIDE SEQUENCE [LARGE SCALE GENOMIC DNA]</scope>
    <source>
        <strain>K12 / MG1655 / ATCC 47076</strain>
    </source>
</reference>
<reference key="3">
    <citation type="journal article" date="2006" name="Mol. Syst. Biol.">
        <title>Highly accurate genome sequences of Escherichia coli K-12 strains MG1655 and W3110.</title>
        <authorList>
            <person name="Hayashi K."/>
            <person name="Morooka N."/>
            <person name="Yamamoto Y."/>
            <person name="Fujita K."/>
            <person name="Isono K."/>
            <person name="Choi S."/>
            <person name="Ohtsubo E."/>
            <person name="Baba T."/>
            <person name="Wanner B.L."/>
            <person name="Mori H."/>
            <person name="Horiuchi T."/>
        </authorList>
    </citation>
    <scope>NUCLEOTIDE SEQUENCE [LARGE SCALE GENOMIC DNA]</scope>
    <source>
        <strain>K12 / W3110 / ATCC 27325 / DSM 5911</strain>
    </source>
</reference>
<reference key="4">
    <citation type="journal article" date="2001" name="J. Biol. Chem.">
        <title>Escherichia coli CreBC is a global regulator of gene expression that responds to growth in minimal media.</title>
        <authorList>
            <person name="Avison M.B."/>
            <person name="Horton R.E."/>
            <person name="Walsh T.R."/>
            <person name="Bennett P.M."/>
        </authorList>
    </citation>
    <scope>INDUCTION BY CREBC</scope>
</reference>
<reference key="5">
    <citation type="journal article" date="2003" name="J. Bacteriol.">
        <title>Phenotype microarray analysis of Escherichia coli K-12 mutants with deletions of all two-component systems.</title>
        <authorList>
            <person name="Zhou L."/>
            <person name="Lei X.-H."/>
            <person name="Bochner B.R."/>
            <person name="Wanner B.L."/>
        </authorList>
    </citation>
    <scope>MUTANT STUDIES</scope>
</reference>
<reference key="6">
    <citation type="journal article" date="2005" name="Science">
        <title>Global topology analysis of the Escherichia coli inner membrane proteome.</title>
        <authorList>
            <person name="Daley D.O."/>
            <person name="Rapp M."/>
            <person name="Granseth E."/>
            <person name="Melen K."/>
            <person name="Drew D."/>
            <person name="von Heijne G."/>
        </authorList>
    </citation>
    <scope>TOPOLOGY [LARGE SCALE ANALYSIS]</scope>
    <source>
        <strain>K12 / MG1655 / ATCC 47076</strain>
    </source>
</reference>
<name>CBRB_ECOLI</name>